<evidence type="ECO:0000250" key="1"/>
<evidence type="ECO:0000269" key="2">
    <source>
    </source>
</evidence>
<evidence type="ECO:0000305" key="3"/>
<comment type="function">
    <text>Most active towards p-nitrophenyl-N-acetyl-beta-D-glucosaminide(PNP-beta-GlcNAc) and diacetylchitobiose.</text>
</comment>
<comment type="catalytic activity">
    <reaction>
        <text>Hydrolysis of terminal non-reducing N-acetyl-D-hexosamine residues in N-acetyl-beta-D-hexosaminides.</text>
        <dbReference type="EC" id="3.2.1.52"/>
    </reaction>
</comment>
<comment type="biophysicochemical properties">
    <phDependence>
        <text>Optimum pH is 7.5.</text>
    </phDependence>
    <temperatureDependence>
        <text>Optimum temperature is 37 degrees Celsius.</text>
    </temperatureDependence>
</comment>
<comment type="similarity">
    <text evidence="3">Belongs to the glycosyl hydrolase 3 family.</text>
</comment>
<gene>
    <name type="primary">cht60</name>
</gene>
<sequence length="598" mass="64539">MSFITSAHATAAQVPLTTSQMLGQKLMLDFRYYCGESKKPSGDCRAAMTTLPPELSELISRYDIGGAILFAENVQNTAQIISLTNALQSAAQQSKSQLPLFIAIDQEGGRVARINREQATSFTGNMSIGATYPKQGDIYATKVASAIGKELNSLGINVNFAPTVDVNSNPNNPVINVRSFSENPTVVTKLGLAQVKAFEAAGVLSALKHFPGHGDTHVDSHTGLPRVDHDRDKINQQDLLPFAEIIKASPPGMIMTAHIQYPALDNSKVVNSQGESMIRPATMSYQIMTQLLRHELGYQGVTVTDALDMAGISDFFNPVDATIETFNAGVDIALMPIAIRNRADIKRFEQYMAQLADALETNKLNQEQLSSSMARIAKLKTKLPQSSASLAIANSTLGNPSHRRLEAELALAAITEVKNDGVLPLRDNAQVVHLIMPDRQKCFALEQALQTYSKNSLTLSCTSLQAYDPDIAHDAIKQADMIIAAHASPPQSAVEIGGMDDVKKLREHGVARNVQPAALKALLQYGQQQGKKQLFISLRAPYEISTFGPLSNAVLASYAYNVDVNHDKKVAGPAYTALAKVILGIAKAEGSLPVTVNH</sequence>
<organism>
    <name type="scientific">Pseudoalteromonas piscicida</name>
    <dbReference type="NCBI Taxonomy" id="43662"/>
    <lineage>
        <taxon>Bacteria</taxon>
        <taxon>Pseudomonadati</taxon>
        <taxon>Pseudomonadota</taxon>
        <taxon>Gammaproteobacteria</taxon>
        <taxon>Alteromonadales</taxon>
        <taxon>Pseudoalteromonadaceae</taxon>
        <taxon>Pseudoalteromonas</taxon>
    </lineage>
</organism>
<feature type="signal peptide" evidence="2">
    <location>
        <begin position="1"/>
        <end position="11"/>
    </location>
</feature>
<feature type="chain" id="PRO_0000011784" description="Beta-hexosaminidase A">
    <location>
        <begin position="12"/>
        <end position="598"/>
    </location>
</feature>
<feature type="active site" evidence="1">
    <location>
        <position position="305"/>
    </location>
</feature>
<protein>
    <recommendedName>
        <fullName>Beta-hexosaminidase A</fullName>
        <ecNumber>3.2.1.52</ecNumber>
    </recommendedName>
    <alternativeName>
        <fullName>Beta-N-acetylhexosaminidase</fullName>
    </alternativeName>
    <alternativeName>
        <fullName>Chitobiase</fullName>
    </alternativeName>
    <alternativeName>
        <fullName>N-acetyl-beta-glucosaminidase</fullName>
    </alternativeName>
</protein>
<dbReference type="EC" id="3.2.1.52"/>
<dbReference type="EMBL" id="D17399">
    <property type="protein sequence ID" value="BAA04223.1"/>
    <property type="molecule type" value="Genomic_DNA"/>
</dbReference>
<dbReference type="SMR" id="P48823"/>
<dbReference type="STRING" id="43662.TW75_07800"/>
<dbReference type="CAZy" id="GH3">
    <property type="family name" value="Glycoside Hydrolase Family 3"/>
</dbReference>
<dbReference type="GO" id="GO:0004563">
    <property type="term" value="F:beta-N-acetylhexosaminidase activity"/>
    <property type="evidence" value="ECO:0007669"/>
    <property type="project" value="UniProtKB-EC"/>
</dbReference>
<dbReference type="GO" id="GO:0005975">
    <property type="term" value="P:carbohydrate metabolic process"/>
    <property type="evidence" value="ECO:0007669"/>
    <property type="project" value="InterPro"/>
</dbReference>
<dbReference type="GO" id="GO:0009254">
    <property type="term" value="P:peptidoglycan turnover"/>
    <property type="evidence" value="ECO:0007669"/>
    <property type="project" value="TreeGrafter"/>
</dbReference>
<dbReference type="Gene3D" id="3.40.50.1700">
    <property type="entry name" value="Glycoside hydrolase family 3 C-terminal domain"/>
    <property type="match status" value="1"/>
</dbReference>
<dbReference type="Gene3D" id="3.20.20.300">
    <property type="entry name" value="Glycoside hydrolase, family 3, N-terminal domain"/>
    <property type="match status" value="1"/>
</dbReference>
<dbReference type="InterPro" id="IPR019800">
    <property type="entry name" value="Glyco_hydro_3_AS"/>
</dbReference>
<dbReference type="InterPro" id="IPR036881">
    <property type="entry name" value="Glyco_hydro_3_C_sf"/>
</dbReference>
<dbReference type="InterPro" id="IPR001764">
    <property type="entry name" value="Glyco_hydro_3_N"/>
</dbReference>
<dbReference type="InterPro" id="IPR036962">
    <property type="entry name" value="Glyco_hydro_3_N_sf"/>
</dbReference>
<dbReference type="InterPro" id="IPR017853">
    <property type="entry name" value="Glycoside_hydrolase_SF"/>
</dbReference>
<dbReference type="InterPro" id="IPR050226">
    <property type="entry name" value="NagZ_Beta-hexosaminidase"/>
</dbReference>
<dbReference type="PANTHER" id="PTHR30480:SF13">
    <property type="entry name" value="BETA-HEXOSAMINIDASE"/>
    <property type="match status" value="1"/>
</dbReference>
<dbReference type="PANTHER" id="PTHR30480">
    <property type="entry name" value="BETA-HEXOSAMINIDASE-RELATED"/>
    <property type="match status" value="1"/>
</dbReference>
<dbReference type="Pfam" id="PF00933">
    <property type="entry name" value="Glyco_hydro_3"/>
    <property type="match status" value="1"/>
</dbReference>
<dbReference type="SUPFAM" id="SSF51445">
    <property type="entry name" value="(Trans)glycosidases"/>
    <property type="match status" value="1"/>
</dbReference>
<dbReference type="PROSITE" id="PS00775">
    <property type="entry name" value="GLYCOSYL_HYDROL_F3"/>
    <property type="match status" value="1"/>
</dbReference>
<reference key="1">
    <citation type="journal article" date="1994" name="Gene">
        <title>Gene sequence, purification and characterization of N-acetyl-beta-glucosaminidase from a marine bacterium, Alteromonas sp. strain O-7.</title>
        <authorList>
            <person name="Tsujibo H."/>
            <person name="Fujimoto K."/>
            <person name="Tanno H."/>
            <person name="Miyamoto K."/>
            <person name="Imada C."/>
            <person name="Okami Y."/>
            <person name="Inamori Y."/>
        </authorList>
    </citation>
    <scope>NUCLEOTIDE SEQUENCE [GENOMIC DNA]</scope>
    <scope>PROTEIN SEQUENCE OF 12-22</scope>
    <source>
        <strain>O-7</strain>
    </source>
</reference>
<keyword id="KW-0903">Direct protein sequencing</keyword>
<keyword id="KW-0326">Glycosidase</keyword>
<keyword id="KW-0378">Hydrolase</keyword>
<keyword id="KW-0732">Signal</keyword>
<accession>P48823</accession>
<proteinExistence type="evidence at protein level"/>
<name>HEXA_PSEO7</name>